<protein>
    <recommendedName>
        <fullName evidence="1">Large ribosomal subunit protein bL28</fullName>
    </recommendedName>
    <alternativeName>
        <fullName evidence="2">50S ribosomal protein L28</fullName>
    </alternativeName>
</protein>
<comment type="similarity">
    <text evidence="1">Belongs to the bacterial ribosomal protein bL28 family.</text>
</comment>
<evidence type="ECO:0000255" key="1">
    <source>
        <dbReference type="HAMAP-Rule" id="MF_00373"/>
    </source>
</evidence>
<evidence type="ECO:0000305" key="2"/>
<name>RL28_HISS2</name>
<proteinExistence type="inferred from homology"/>
<organism>
    <name type="scientific">Histophilus somni (strain 2336)</name>
    <name type="common">Haemophilus somnus</name>
    <dbReference type="NCBI Taxonomy" id="228400"/>
    <lineage>
        <taxon>Bacteria</taxon>
        <taxon>Pseudomonadati</taxon>
        <taxon>Pseudomonadota</taxon>
        <taxon>Gammaproteobacteria</taxon>
        <taxon>Pasteurellales</taxon>
        <taxon>Pasteurellaceae</taxon>
        <taxon>Histophilus</taxon>
    </lineage>
</organism>
<keyword id="KW-0687">Ribonucleoprotein</keyword>
<keyword id="KW-0689">Ribosomal protein</keyword>
<accession>B0UUW8</accession>
<sequence>MSRVCQVTGKRPAVGNNRSHAMNATRRRFLPNLHTHRFWVESEKRFVTLRLTAKGMRIIDKKGIDAVLAEIRARGEKI</sequence>
<dbReference type="EMBL" id="CP000947">
    <property type="protein sequence ID" value="ACA30708.1"/>
    <property type="molecule type" value="Genomic_DNA"/>
</dbReference>
<dbReference type="RefSeq" id="WP_011608297.1">
    <property type="nucleotide sequence ID" value="NC_010519.1"/>
</dbReference>
<dbReference type="SMR" id="B0UUW8"/>
<dbReference type="STRING" id="228400.HSM_0010"/>
<dbReference type="GeneID" id="66256360"/>
<dbReference type="KEGG" id="hsm:HSM_0010"/>
<dbReference type="HOGENOM" id="CLU_064548_3_1_6"/>
<dbReference type="GO" id="GO:0022625">
    <property type="term" value="C:cytosolic large ribosomal subunit"/>
    <property type="evidence" value="ECO:0007669"/>
    <property type="project" value="TreeGrafter"/>
</dbReference>
<dbReference type="GO" id="GO:0003735">
    <property type="term" value="F:structural constituent of ribosome"/>
    <property type="evidence" value="ECO:0007669"/>
    <property type="project" value="InterPro"/>
</dbReference>
<dbReference type="GO" id="GO:0006412">
    <property type="term" value="P:translation"/>
    <property type="evidence" value="ECO:0007669"/>
    <property type="project" value="UniProtKB-UniRule"/>
</dbReference>
<dbReference type="FunFam" id="2.30.170.40:FF:000001">
    <property type="entry name" value="50S ribosomal protein L28"/>
    <property type="match status" value="1"/>
</dbReference>
<dbReference type="Gene3D" id="2.30.170.40">
    <property type="entry name" value="Ribosomal protein L28/L24"/>
    <property type="match status" value="1"/>
</dbReference>
<dbReference type="HAMAP" id="MF_00373">
    <property type="entry name" value="Ribosomal_bL28"/>
    <property type="match status" value="1"/>
</dbReference>
<dbReference type="InterPro" id="IPR026569">
    <property type="entry name" value="Ribosomal_bL28"/>
</dbReference>
<dbReference type="InterPro" id="IPR034704">
    <property type="entry name" value="Ribosomal_bL28/bL31-like_sf"/>
</dbReference>
<dbReference type="InterPro" id="IPR001383">
    <property type="entry name" value="Ribosomal_bL28_bact-type"/>
</dbReference>
<dbReference type="InterPro" id="IPR037147">
    <property type="entry name" value="Ribosomal_bL28_sf"/>
</dbReference>
<dbReference type="NCBIfam" id="TIGR00009">
    <property type="entry name" value="L28"/>
    <property type="match status" value="1"/>
</dbReference>
<dbReference type="PANTHER" id="PTHR13528">
    <property type="entry name" value="39S RIBOSOMAL PROTEIN L28, MITOCHONDRIAL"/>
    <property type="match status" value="1"/>
</dbReference>
<dbReference type="PANTHER" id="PTHR13528:SF2">
    <property type="entry name" value="LARGE RIBOSOMAL SUBUNIT PROTEIN BL28M"/>
    <property type="match status" value="1"/>
</dbReference>
<dbReference type="Pfam" id="PF00830">
    <property type="entry name" value="Ribosomal_L28"/>
    <property type="match status" value="1"/>
</dbReference>
<dbReference type="SUPFAM" id="SSF143800">
    <property type="entry name" value="L28p-like"/>
    <property type="match status" value="1"/>
</dbReference>
<gene>
    <name evidence="1" type="primary">rpmB</name>
    <name type="ordered locus">HSM_0010</name>
</gene>
<reference key="1">
    <citation type="submission" date="2008-02" db="EMBL/GenBank/DDBJ databases">
        <title>Complete sequence of Haemophilus somnus 2336.</title>
        <authorList>
            <consortium name="US DOE Joint Genome Institute"/>
            <person name="Siddaramappa S."/>
            <person name="Duncan A.J."/>
            <person name="Challacombe J.F."/>
            <person name="Rainey D."/>
            <person name="Gillaspy A.F."/>
            <person name="Carson M."/>
            <person name="Gipson J."/>
            <person name="Gipson M."/>
            <person name="Bruce D."/>
            <person name="Detter J.C."/>
            <person name="Han C.S."/>
            <person name="Land M."/>
            <person name="Tapia R."/>
            <person name="Thompson L.S."/>
            <person name="Orvis J."/>
            <person name="Zaitshik J."/>
            <person name="Barnes G."/>
            <person name="Brettin T.S."/>
            <person name="Dyer D.W."/>
            <person name="Inzana T.J."/>
        </authorList>
    </citation>
    <scope>NUCLEOTIDE SEQUENCE [LARGE SCALE GENOMIC DNA]</scope>
    <source>
        <strain>2336</strain>
    </source>
</reference>
<feature type="chain" id="PRO_1000079853" description="Large ribosomal subunit protein bL28">
    <location>
        <begin position="1"/>
        <end position="78"/>
    </location>
</feature>